<comment type="function">
    <text evidence="2">A bidirectional acetate kinase that may drive flux through the ethanolamine degradation pathway under anoxic conditions. It may generate ATP that can be used by other enzymes (EutA and EutT) in the eut pathway. Might serve as an assembly hub for bacterial microcompartment (BMC) shell proteins.</text>
</comment>
<comment type="catalytic activity">
    <reaction evidence="2">
        <text>acetate + ATP = acetyl phosphate + ADP</text>
        <dbReference type="Rhea" id="RHEA:11352"/>
        <dbReference type="ChEBI" id="CHEBI:22191"/>
        <dbReference type="ChEBI" id="CHEBI:30089"/>
        <dbReference type="ChEBI" id="CHEBI:30616"/>
        <dbReference type="ChEBI" id="CHEBI:456216"/>
        <dbReference type="EC" id="2.7.2.1"/>
    </reaction>
    <physiologicalReaction direction="left-to-right" evidence="2">
        <dbReference type="Rhea" id="RHEA:11353"/>
    </physiologicalReaction>
    <physiologicalReaction direction="right-to-left" evidence="2">
        <dbReference type="Rhea" id="RHEA:11354"/>
    </physiologicalReaction>
</comment>
<comment type="pathway">
    <text>Amine and polyamine degradation; ethanolamine degradation.</text>
</comment>
<comment type="subunit">
    <text evidence="1">Homodimer.</text>
</comment>
<comment type="interaction">
    <interactant intactId="EBI-553018">
        <id>P76555</id>
    </interactant>
    <interactant intactId="EBI-553024">
        <id>P77609</id>
        <label>flxA</label>
    </interactant>
    <organismsDiffer>false</organismsDiffer>
    <experiments>3</experiments>
</comment>
<comment type="subcellular location">
    <subcellularLocation>
        <location evidence="2">Bacterial microcompartment</location>
    </subcellularLocation>
    <text evidence="2">May be found on the cytoplasmic face of the BMC.</text>
</comment>
<comment type="similarity">
    <text evidence="3">Belongs to the EutQ cupin-like family.</text>
</comment>
<comment type="caution">
    <text evidence="4">In strain MG1655 the eut operon is interrupted by the CPZ-55 prophage, encoding 9 genes situated between eutA and eutB, which are translated in the other direction. CPZ-55 may prevent expression of the eut operon in strain MG1655. Strain W3110 does not have this prophage element and should be able to express the operon.</text>
</comment>
<evidence type="ECO:0000250" key="1">
    <source>
        <dbReference type="UniProtKB" id="Q187N7"/>
    </source>
</evidence>
<evidence type="ECO:0000250" key="2">
    <source>
        <dbReference type="UniProtKB" id="Q9ZFV5"/>
    </source>
</evidence>
<evidence type="ECO:0000305" key="3"/>
<evidence type="ECO:0000305" key="4">
    <source>
    </source>
</evidence>
<keyword id="KW-1283">Bacterial microcompartment</keyword>
<keyword id="KW-0418">Kinase</keyword>
<keyword id="KW-1185">Reference proteome</keyword>
<keyword id="KW-0808">Transferase</keyword>
<gene>
    <name type="primary">eutQ</name>
    <name type="synonym">ypfC</name>
    <name type="ordered locus">b2460</name>
    <name type="ordered locus">JW2444</name>
</gene>
<sequence>MKKLITANDIREAHARGEQAMSVVLRASIITPEAREVADLLGFTITECDESIPVTASVPASVPADKTESQRIRETIIAQLPEGQFTESLVAQLMEKVMKEKQSLEQGAMQPSFKSVTGKGGIKVIDGSSVKFGRFDGAEPHCVGLTDLVTGDDGSSMAAGFMQWENAFFPWTLNYDEIDMVLEGELHVRHEGQTMIAKAGDVMFIPKGSSIEFGTTSSVKFLYVAWPANWQSL</sequence>
<organism>
    <name type="scientific">Escherichia coli (strain K12)</name>
    <dbReference type="NCBI Taxonomy" id="83333"/>
    <lineage>
        <taxon>Bacteria</taxon>
        <taxon>Pseudomonadati</taxon>
        <taxon>Pseudomonadota</taxon>
        <taxon>Gammaproteobacteria</taxon>
        <taxon>Enterobacterales</taxon>
        <taxon>Enterobacteriaceae</taxon>
        <taxon>Escherichia</taxon>
    </lineage>
</organism>
<proteinExistence type="evidence at protein level"/>
<accession>P76555</accession>
<accession>Q2MAI8</accession>
<feature type="chain" id="PRO_0000087097" description="Acetate kinase EutQ">
    <location>
        <begin position="1"/>
        <end position="233"/>
    </location>
</feature>
<protein>
    <recommendedName>
        <fullName>Acetate kinase EutQ</fullName>
        <ecNumber evidence="2">2.7.2.1</ecNumber>
    </recommendedName>
    <alternativeName>
        <fullName>Ethanolamine utilization protein EutQ</fullName>
    </alternativeName>
</protein>
<name>EUTQ_ECOLI</name>
<dbReference type="EC" id="2.7.2.1" evidence="2"/>
<dbReference type="EMBL" id="U00096">
    <property type="protein sequence ID" value="AAC75513.1"/>
    <property type="molecule type" value="Genomic_DNA"/>
</dbReference>
<dbReference type="EMBL" id="AP009048">
    <property type="protein sequence ID" value="BAE76718.1"/>
    <property type="molecule type" value="Genomic_DNA"/>
</dbReference>
<dbReference type="PIR" id="C65021">
    <property type="entry name" value="C65021"/>
</dbReference>
<dbReference type="RefSeq" id="NP_416955.1">
    <property type="nucleotide sequence ID" value="NC_000913.3"/>
</dbReference>
<dbReference type="RefSeq" id="WP_000733906.1">
    <property type="nucleotide sequence ID" value="NZ_LN832404.1"/>
</dbReference>
<dbReference type="SMR" id="P76555"/>
<dbReference type="BioGRID" id="4260918">
    <property type="interactions" value="19"/>
</dbReference>
<dbReference type="BioGRID" id="851274">
    <property type="interactions" value="5"/>
</dbReference>
<dbReference type="DIP" id="DIP-9540N"/>
<dbReference type="FunCoup" id="P76555">
    <property type="interactions" value="101"/>
</dbReference>
<dbReference type="IntAct" id="P76555">
    <property type="interactions" value="12"/>
</dbReference>
<dbReference type="STRING" id="511145.b2460"/>
<dbReference type="TCDB" id="9.B.75.2.1">
    <property type="family name" value="the ethanol utilization/transport (eut) protein family"/>
</dbReference>
<dbReference type="jPOST" id="P76555"/>
<dbReference type="PaxDb" id="511145-b2460"/>
<dbReference type="DNASU" id="946935"/>
<dbReference type="EnsemblBacteria" id="AAC75513">
    <property type="protein sequence ID" value="AAC75513"/>
    <property type="gene ID" value="b2460"/>
</dbReference>
<dbReference type="GeneID" id="75204268"/>
<dbReference type="GeneID" id="946935"/>
<dbReference type="KEGG" id="ecj:JW2444"/>
<dbReference type="KEGG" id="eco:b2460"/>
<dbReference type="KEGG" id="ecoc:C3026_13650"/>
<dbReference type="PATRIC" id="fig|511145.12.peg.2554"/>
<dbReference type="EchoBASE" id="EB3942"/>
<dbReference type="eggNOG" id="COG4766">
    <property type="taxonomic scope" value="Bacteria"/>
</dbReference>
<dbReference type="HOGENOM" id="CLU_082122_0_0_6"/>
<dbReference type="InParanoid" id="P76555"/>
<dbReference type="OMA" id="SKVTWSS"/>
<dbReference type="OrthoDB" id="3828611at2"/>
<dbReference type="PhylomeDB" id="P76555"/>
<dbReference type="BioCyc" id="EcoCyc:G7290-MONOMER"/>
<dbReference type="UniPathway" id="UPA00560"/>
<dbReference type="PRO" id="PR:P76555"/>
<dbReference type="Proteomes" id="UP000000625">
    <property type="component" value="Chromosome"/>
</dbReference>
<dbReference type="GO" id="GO:0031471">
    <property type="term" value="C:ethanolamine degradation polyhedral organelle"/>
    <property type="evidence" value="ECO:0000318"/>
    <property type="project" value="GO_Central"/>
</dbReference>
<dbReference type="GO" id="GO:0008776">
    <property type="term" value="F:acetate kinase activity"/>
    <property type="evidence" value="ECO:0007669"/>
    <property type="project" value="UniProtKB-EC"/>
</dbReference>
<dbReference type="GO" id="GO:0046336">
    <property type="term" value="P:ethanolamine catabolic process"/>
    <property type="evidence" value="ECO:0007669"/>
    <property type="project" value="UniProtKB-UniPathway"/>
</dbReference>
<dbReference type="GO" id="GO:0006091">
    <property type="term" value="P:generation of precursor metabolites and energy"/>
    <property type="evidence" value="ECO:0000318"/>
    <property type="project" value="GO_Central"/>
</dbReference>
<dbReference type="CDD" id="cd02228">
    <property type="entry name" value="cupin_EutQ"/>
    <property type="match status" value="1"/>
</dbReference>
<dbReference type="Gene3D" id="2.60.120.10">
    <property type="entry name" value="Jelly Rolls"/>
    <property type="match status" value="1"/>
</dbReference>
<dbReference type="InterPro" id="IPR010424">
    <property type="entry name" value="EutQ"/>
</dbReference>
<dbReference type="InterPro" id="IPR014710">
    <property type="entry name" value="RmlC-like_jellyroll"/>
</dbReference>
<dbReference type="InterPro" id="IPR011051">
    <property type="entry name" value="RmlC_Cupin_sf"/>
</dbReference>
<dbReference type="NCBIfam" id="NF012001">
    <property type="entry name" value="PRK15457.1"/>
    <property type="match status" value="1"/>
</dbReference>
<dbReference type="PANTHER" id="PTHR36169:SF1">
    <property type="entry name" value="ACETATE KINASE EUTQ"/>
    <property type="match status" value="1"/>
</dbReference>
<dbReference type="PANTHER" id="PTHR36169">
    <property type="entry name" value="ETHANOLAMINE UTILIZATION PROTEIN EUTQ"/>
    <property type="match status" value="1"/>
</dbReference>
<dbReference type="Pfam" id="PF06249">
    <property type="entry name" value="EutQ"/>
    <property type="match status" value="1"/>
</dbReference>
<dbReference type="SUPFAM" id="SSF51182">
    <property type="entry name" value="RmlC-like cupins"/>
    <property type="match status" value="1"/>
</dbReference>
<reference key="1">
    <citation type="journal article" date="1997" name="Science">
        <title>The complete genome sequence of Escherichia coli K-12.</title>
        <authorList>
            <person name="Blattner F.R."/>
            <person name="Plunkett G. III"/>
            <person name="Bloch C.A."/>
            <person name="Perna N.T."/>
            <person name="Burland V."/>
            <person name="Riley M."/>
            <person name="Collado-Vides J."/>
            <person name="Glasner J.D."/>
            <person name="Rode C.K."/>
            <person name="Mayhew G.F."/>
            <person name="Gregor J."/>
            <person name="Davis N.W."/>
            <person name="Kirkpatrick H.A."/>
            <person name="Goeden M.A."/>
            <person name="Rose D.J."/>
            <person name="Mau B."/>
            <person name="Shao Y."/>
        </authorList>
    </citation>
    <scope>NUCLEOTIDE SEQUENCE [LARGE SCALE GENOMIC DNA]</scope>
    <source>
        <strain>K12 / MG1655 / ATCC 47076</strain>
    </source>
</reference>
<reference key="2">
    <citation type="journal article" date="2006" name="Mol. Syst. Biol.">
        <title>Highly accurate genome sequences of Escherichia coli K-12 strains MG1655 and W3110.</title>
        <authorList>
            <person name="Hayashi K."/>
            <person name="Morooka N."/>
            <person name="Yamamoto Y."/>
            <person name="Fujita K."/>
            <person name="Isono K."/>
            <person name="Choi S."/>
            <person name="Ohtsubo E."/>
            <person name="Baba T."/>
            <person name="Wanner B.L."/>
            <person name="Mori H."/>
            <person name="Horiuchi T."/>
        </authorList>
    </citation>
    <scope>NUCLEOTIDE SEQUENCE [LARGE SCALE GENOMIC DNA]</scope>
    <source>
        <strain>K12 / W3110 / ATCC 27325 / DSM 5911</strain>
    </source>
</reference>